<keyword id="KW-0091">Biomineralization</keyword>
<keyword id="KW-0272">Extracellular matrix</keyword>
<keyword id="KW-1185">Reference proteome</keyword>
<keyword id="KW-0677">Repeat</keyword>
<keyword id="KW-0964">Secreted</keyword>
<keyword id="KW-0732">Signal</keyword>
<name>AMELY_PANTR</name>
<feature type="signal peptide" evidence="1">
    <location>
        <begin position="1"/>
        <end position="16"/>
    </location>
</feature>
<feature type="chain" id="PRO_0000045794" description="Amelogenin, Y isoform">
    <location>
        <begin position="17"/>
        <end position="203"/>
    </location>
</feature>
<feature type="region of interest" description="Disordered" evidence="2">
    <location>
        <begin position="116"/>
        <end position="180"/>
    </location>
</feature>
<feature type="compositionally biased region" description="Polar residues" evidence="2">
    <location>
        <begin position="120"/>
        <end position="130"/>
    </location>
</feature>
<feature type="compositionally biased region" description="Low complexity" evidence="2">
    <location>
        <begin position="131"/>
        <end position="142"/>
    </location>
</feature>
<feature type="compositionally biased region" description="Pro residues" evidence="2">
    <location>
        <begin position="143"/>
        <end position="180"/>
    </location>
</feature>
<feature type="non-terminal residue">
    <location>
        <position position="203"/>
    </location>
</feature>
<organism>
    <name type="scientific">Pan troglodytes</name>
    <name type="common">Chimpanzee</name>
    <dbReference type="NCBI Taxonomy" id="9598"/>
    <lineage>
        <taxon>Eukaryota</taxon>
        <taxon>Metazoa</taxon>
        <taxon>Chordata</taxon>
        <taxon>Craniata</taxon>
        <taxon>Vertebrata</taxon>
        <taxon>Euteleostomi</taxon>
        <taxon>Mammalia</taxon>
        <taxon>Eutheria</taxon>
        <taxon>Euarchontoglires</taxon>
        <taxon>Primates</taxon>
        <taxon>Haplorrhini</taxon>
        <taxon>Catarrhini</taxon>
        <taxon>Hominidae</taxon>
        <taxon>Pan</taxon>
    </lineage>
</organism>
<protein>
    <recommendedName>
        <fullName>Amelogenin, Y isoform</fullName>
    </recommendedName>
</protein>
<comment type="function">
    <text evidence="1">Plays a role in biomineralization. Seems to regulate the formation of crystallites during the secretory stage of tooth enamel development. Thought to play a major role in the structural organization and mineralization of developing enamel (By similarity).</text>
</comment>
<comment type="subcellular location">
    <subcellularLocation>
        <location evidence="1">Secreted</location>
        <location evidence="1">Extracellular space</location>
        <location evidence="1">Extracellular matrix</location>
    </subcellularLocation>
</comment>
<comment type="similarity">
    <text evidence="3">Belongs to the amelogenin family.</text>
</comment>
<proteinExistence type="inferred from homology"/>
<accession>Q861X8</accession>
<dbReference type="EMBL" id="AB091782">
    <property type="protein sequence ID" value="BAC66102.1"/>
    <property type="molecule type" value="Genomic_DNA"/>
</dbReference>
<dbReference type="STRING" id="9598.ENSPTRP00000088203"/>
<dbReference type="PaxDb" id="9598-ENSPTRP00000038754"/>
<dbReference type="eggNOG" id="ENOG502S4XP">
    <property type="taxonomic scope" value="Eukaryota"/>
</dbReference>
<dbReference type="InParanoid" id="Q861X8"/>
<dbReference type="Proteomes" id="UP000002277">
    <property type="component" value="Unplaced"/>
</dbReference>
<dbReference type="GO" id="GO:0062023">
    <property type="term" value="C:collagen-containing extracellular matrix"/>
    <property type="evidence" value="ECO:0000318"/>
    <property type="project" value="GO_Central"/>
</dbReference>
<dbReference type="GO" id="GO:0005576">
    <property type="term" value="C:extracellular region"/>
    <property type="evidence" value="ECO:0007669"/>
    <property type="project" value="UniProtKB-KW"/>
</dbReference>
<dbReference type="GO" id="GO:0030345">
    <property type="term" value="F:structural constituent of tooth enamel"/>
    <property type="evidence" value="ECO:0000318"/>
    <property type="project" value="GO_Central"/>
</dbReference>
<dbReference type="GO" id="GO:0070166">
    <property type="term" value="P:enamel mineralization"/>
    <property type="evidence" value="ECO:0000318"/>
    <property type="project" value="GO_Central"/>
</dbReference>
<dbReference type="InterPro" id="IPR004116">
    <property type="entry name" value="Amelogenin"/>
</dbReference>
<dbReference type="PANTHER" id="PTHR46794">
    <property type="entry name" value="AMELOGENIN, Y ISOFORM"/>
    <property type="match status" value="1"/>
</dbReference>
<dbReference type="PANTHER" id="PTHR46794:SF6">
    <property type="entry name" value="AMELOGENIN, Y ISOFORM"/>
    <property type="match status" value="1"/>
</dbReference>
<dbReference type="Pfam" id="PF02948">
    <property type="entry name" value="Amelogenin"/>
    <property type="match status" value="1"/>
</dbReference>
<dbReference type="PRINTS" id="PR01757">
    <property type="entry name" value="AMELOGENIN"/>
</dbReference>
<dbReference type="SMART" id="SM00818">
    <property type="entry name" value="Amelogenin"/>
    <property type="match status" value="1"/>
</dbReference>
<reference key="1">
    <citation type="journal article" date="2003" name="Proc. Natl. Acad. Sci. U.S.A.">
        <title>The amelogenin loci span an ancient pseudoautosomal boundary in diverse mammalian species.</title>
        <authorList>
            <person name="Iwase M."/>
            <person name="Satta Y."/>
            <person name="Hirai Y."/>
            <person name="Hirai H."/>
            <person name="Imai H."/>
            <person name="Takahata N."/>
        </authorList>
    </citation>
    <scope>NUCLEOTIDE SEQUENCE [GENOMIC DNA]</scope>
</reference>
<sequence length="203" mass="22897">MGTWILFACLVGAAFAMPLPPHPGHPGYINFSYENSHSQAINVDRIALVLTPLKWYQSMIRPPYSSYGYEPMGGWLHHQIIPVVSQQHPLTHTLQSHHHIPVVPAQQPRVPQQAMMPVPGQQSMTPTQHHQPNLPLPAQQPFQPQPVQPLPHQPMQPQPPVQPMQPLLPQPPLPPMFPMRPLPPILPDLHLEAWPATDKTKRE</sequence>
<gene>
    <name type="primary">AMELY</name>
</gene>
<evidence type="ECO:0000250" key="1"/>
<evidence type="ECO:0000256" key="2">
    <source>
        <dbReference type="SAM" id="MobiDB-lite"/>
    </source>
</evidence>
<evidence type="ECO:0000305" key="3"/>